<name>RS3_PIG</name>
<reference key="1">
    <citation type="submission" date="2006-05" db="EMBL/GenBank/DDBJ databases">
        <title>The cloning and expression analysis of pig rps3 cDNA.</title>
        <authorList>
            <person name="Yang X."/>
            <person name="Yu H."/>
            <person name="Guo L."/>
            <person name="Liu D."/>
        </authorList>
    </citation>
    <scope>NUCLEOTIDE SEQUENCE [MRNA]</scope>
</reference>
<protein>
    <recommendedName>
        <fullName evidence="5">Small ribosomal subunit protein uS3</fullName>
        <ecNumber evidence="1">4.2.99.18</ecNumber>
    </recommendedName>
    <alternativeName>
        <fullName>40S ribosomal protein S3</fullName>
    </alternativeName>
</protein>
<comment type="function">
    <text evidence="1">Involved in translation as a component of the 40S small ribosomal subunit. Has endonuclease activity and plays a role in repair of damaged DNA. Cleaves phosphodiester bonds of DNAs containing altered bases with broad specificity and cleaves supercoiled DNA more efficiently than relaxed DNA. Displays high binding affinity for 7,8-dihydro-8-oxoguanine (8-oxoG), a common DNA lesion caused by reactive oxygen species (ROS). Has also been shown to bind with similar affinity to intact and damaged DNA. Stimulates the N-glycosylase activity of the base excision protein OGG1. Enhances the uracil excision activity of UNG1. Also stimulates the cleavage of the phosphodiester backbone by APEX1. When located in the mitochondrion, reduces cellular ROS levels and mitochondrial DNA damage. Has also been shown to negatively regulate DNA repair in cells exposed to hydrogen peroxide. Plays a role in regulating transcription as part of the NF-kappa-B p65-p50 complex where it binds to the RELA/p65 subunit, enhances binding of the complex to DNA and promotes transcription of target genes. Represses its own translation by binding to its cognate mRNA. Binds to and protects TP53/p53 from MDM2-mediated ubiquitination. Involved in spindle formation and chromosome movement during mitosis by regulating microtubule polymerization. Involved in induction of apoptosis through its role in activation of CASP8. Induces neuronal apoptosis by interacting with the E2F1 transcription factor and acting synergistically with it to up-regulate pro-apoptotic proteins BCL2L11/BIM and HRK/Dp5. Interacts with TRADD following exposure to UV radiation and induces apoptosis by caspase-dependent JNK activation.</text>
</comment>
<comment type="catalytic activity">
    <reaction evidence="1">
        <text>2'-deoxyribonucleotide-(2'-deoxyribose 5'-phosphate)-2'-deoxyribonucleotide-DNA = a 3'-end 2'-deoxyribonucleotide-(2,3-dehydro-2,3-deoxyribose 5'-phosphate)-DNA + a 5'-end 5'-phospho-2'-deoxyribonucleoside-DNA + H(+)</text>
        <dbReference type="Rhea" id="RHEA:66592"/>
        <dbReference type="Rhea" id="RHEA-COMP:13180"/>
        <dbReference type="Rhea" id="RHEA-COMP:16897"/>
        <dbReference type="Rhea" id="RHEA-COMP:17067"/>
        <dbReference type="ChEBI" id="CHEBI:15378"/>
        <dbReference type="ChEBI" id="CHEBI:136412"/>
        <dbReference type="ChEBI" id="CHEBI:157695"/>
        <dbReference type="ChEBI" id="CHEBI:167181"/>
        <dbReference type="EC" id="4.2.99.18"/>
    </reaction>
</comment>
<comment type="subunit">
    <text evidence="1 2">Component of the 40S small ribosomal subunit. Identified in a IGF2BP1-dependent mRNP granule complex containing untranslated mRNAs. Interacts with HNRPD. Interacts with PRMT1; the interaction methylates RPS3. Interacts with SUMO1; the interaction sumoylates RPS3. Interacts with UBC9. Interacts with CDK1; the interaction phosphorylates RPS3. Interacts with PRKCD; the interaction phosphorylates RPS3. Interacts with PKB/AKT; the interaction phosphorylates RPS3. Interacts with E2F1; the interaction occurs in the absence of nerve growth factor and increases transcription of pro-apoptotic proteins BCL2L11/BIM and HRK/Dp5. Interacts with the base excision repair proteins APEX1 and OGG1; interaction with OGG1 increases OGG1 N-glycosylase activity. Interacts with UNG; the interaction increases the uracil excision activity of UNG1. Interacts with HSP90; the interaction prevents the ubiquitination and proteasome-dependent degradation of RPS3 and is suppressed by increased ROS levels. Interacts with TOM70; the interaction promotes translocation of RPS3 to the mitochondrion. Interacts (via N-terminus) with RELA (via N-terminus); the interaction enhances the DNA-binding activity of the NF-kappa-B p65-p50 complex. Interacts with NFKBIA; the interaction is direct and may bridge the interaction between RPS3 and RELA. Interacts with IKKB; the interaction phosphorylates RPS3 and enhances its translocation to the nucleus. Interacts (via KH domain) with MDM2 and TP53. Interacts with TRADD. Interacts with CRY1.</text>
</comment>
<comment type="subcellular location">
    <subcellularLocation>
        <location evidence="1">Cytoplasm</location>
    </subcellularLocation>
    <subcellularLocation>
        <location evidence="1">Nucleus</location>
    </subcellularLocation>
    <subcellularLocation>
        <location evidence="1">Nucleus</location>
        <location evidence="1">Nucleolus</location>
    </subcellularLocation>
    <subcellularLocation>
        <location evidence="1">Mitochondrion inner membrane</location>
        <topology evidence="1">Peripheral membrane protein</topology>
    </subcellularLocation>
    <subcellularLocation>
        <location evidence="1">Cytoplasm</location>
        <location evidence="1">Cytoskeleton</location>
        <location evidence="1">Spindle</location>
    </subcellularLocation>
    <text evidence="1 2">In normal cells, located mainly in the cytoplasm with small amounts in the nucleus but translocates to the nucleus in cells undergoing apoptosis. Nuclear translocation is induced by DNA damaging agents such as hydrogen peroxide. Accumulates in the mitochondrion in response to increased ROS levels. Localizes to the spindle during mitosis. Localized in cytoplasmic mRNP granules containing untranslated mRNAs.</text>
</comment>
<comment type="PTM">
    <text evidence="1">Methylation by PRMT1 is required for import into the nucleolus and for ribosome assembly.</text>
</comment>
<comment type="PTM">
    <text evidence="1">Sumoylation by SUMO1 enhances protein stability through increased resistance to proteolysis. Sumoylation occurs at one or more of the three consensus sites, Lys-18, Lys-214 and Lys-230.</text>
</comment>
<comment type="PTM">
    <text evidence="1">Phosphorylation at Thr-221 by CDK1 occurs mainly in G2/M phase. Phosphorylation by PRKCD occurs on a non-ribosomal-associated form which results in translocation of RPS3 to the nucleus and enhances its endonuclease activity. Phosphorylated on Ser-209 by IKKB in response to activation of the NF-kappa-B p65-p50 complex which enhances the association of RPS3 with importin-alpha and mediates the nuclear translocation of RPS3. Phosphorylation by MAPK is required for translocation to the nucleus following exposure of cells to DNA damaging agents such as hydrogen peroxide. Phosphorylation by PKB/AKT mediates RPS3 nuclear translocation, enhances RPS3 endonuclease activity and suppresses RPS3-induced neuronal apoptosis.</text>
</comment>
<comment type="PTM">
    <text evidence="1">Ubiquitinated; ubiquitination is prevented by interaction with HSP90 which stabilizes the protein. Monoubiquitinated at Lys-214 by RNF10 and ZNF598 when a ribosome has stalled during translation of poly(A) sequences, leading to preclude synthesis of a long poly-lysine tail and initiate the ribosome quality control (RQC) pathway to degrade the potentially detrimental aberrant nascent polypeptide. Deubiquitinated at Lys-214 by USP10, preventing degradation by the proteasome and promoting 40S ribosome subunit recycling following ribosome dissociation.</text>
</comment>
<comment type="PTM">
    <text evidence="2">Ufmylated by UFL1.</text>
</comment>
<comment type="similarity">
    <text evidence="5">Belongs to the universal ribosomal protein uS3 family.</text>
</comment>
<accession>Q0Z8U2</accession>
<sequence>MAVQISKKRKFVADGIFKAELNEFLTRELAEDGYSGVEVRVTPTRTEIIILATRTQNVLGEKGRRIRELTAVVQKRFGFPEGSVELYAEKVATRGLCAIAQAESLRYKLLGGLAVRRACYGVLRFIMESGAKGCEVVVSGKLRGQRAKSMKFVDGLMIHSGDPVNYYVDTAVRHVLLRQGVLGIKVKIMLPWDPTGKIGPKKPLPDHVSIVEPKDEILPTTPISEQKGGKPEPPAMPQPVPTA</sequence>
<proteinExistence type="evidence at protein level"/>
<organism>
    <name type="scientific">Sus scrofa</name>
    <name type="common">Pig</name>
    <dbReference type="NCBI Taxonomy" id="9823"/>
    <lineage>
        <taxon>Eukaryota</taxon>
        <taxon>Metazoa</taxon>
        <taxon>Chordata</taxon>
        <taxon>Craniata</taxon>
        <taxon>Vertebrata</taxon>
        <taxon>Euteleostomi</taxon>
        <taxon>Mammalia</taxon>
        <taxon>Eutheria</taxon>
        <taxon>Laurasiatheria</taxon>
        <taxon>Artiodactyla</taxon>
        <taxon>Suina</taxon>
        <taxon>Suidae</taxon>
        <taxon>Sus</taxon>
    </lineage>
</organism>
<feature type="initiator methionine" description="Removed" evidence="1">
    <location>
        <position position="1"/>
    </location>
</feature>
<feature type="chain" id="PRO_0000250454" description="Small ribosomal subunit protein uS3">
    <location>
        <begin position="2"/>
        <end position="243"/>
    </location>
</feature>
<feature type="domain" description="KH type-2" evidence="3">
    <location>
        <begin position="21"/>
        <end position="92"/>
    </location>
</feature>
<feature type="region of interest" description="Disordered" evidence="4">
    <location>
        <begin position="214"/>
        <end position="243"/>
    </location>
</feature>
<feature type="compositionally biased region" description="Pro residues" evidence="4">
    <location>
        <begin position="231"/>
        <end position="243"/>
    </location>
</feature>
<feature type="modified residue" description="N-acetylalanine" evidence="1">
    <location>
        <position position="2"/>
    </location>
</feature>
<feature type="modified residue" description="Phosphoserine; by PKC/PRKCD" evidence="1">
    <location>
        <position position="6"/>
    </location>
</feature>
<feature type="modified residue" description="Phosphoserine" evidence="1">
    <location>
        <position position="35"/>
    </location>
</feature>
<feature type="modified residue" description="Phosphothreonine; by MAPK" evidence="1">
    <location>
        <position position="42"/>
    </location>
</feature>
<feature type="modified residue" description="N6-acetyllysine" evidence="1">
    <location>
        <position position="62"/>
    </location>
</feature>
<feature type="modified residue" description="Asymmetric dimethylarginine; by PRMT1" evidence="1">
    <location>
        <position position="64"/>
    </location>
</feature>
<feature type="modified residue" description="Asymmetric dimethylarginine; by PRMT1" evidence="1">
    <location>
        <position position="65"/>
    </location>
</feature>
<feature type="modified residue" description="Asymmetric dimethylarginine; by PRMT1" evidence="1">
    <location>
        <position position="67"/>
    </location>
</feature>
<feature type="modified residue" description="Phosphothreonine; by PKB" evidence="1">
    <location>
        <position position="70"/>
    </location>
</feature>
<feature type="modified residue" description="Phosphoserine" evidence="1">
    <location>
        <position position="104"/>
    </location>
</feature>
<feature type="modified residue" description="N6-succinyllysine" evidence="2">
    <location>
        <position position="132"/>
    </location>
</feature>
<feature type="modified residue" description="Phosphoserine; by IKKB" evidence="1">
    <location>
        <position position="209"/>
    </location>
</feature>
<feature type="modified residue" description="Phosphothreonine" evidence="1">
    <location>
        <position position="220"/>
    </location>
</feature>
<feature type="modified residue" description="Phosphothreonine; by CDK1 and PKC/PRKCD" evidence="1">
    <location>
        <position position="221"/>
    </location>
</feature>
<feature type="modified residue" description="Phosphoserine" evidence="1">
    <location>
        <position position="224"/>
    </location>
</feature>
<feature type="modified residue" description="Phosphothreonine" evidence="1">
    <location>
        <position position="242"/>
    </location>
</feature>
<feature type="cross-link" description="Glycyl lysine isopeptide (Lys-Gly) (interchain with G-Cter in ubiquitin)" evidence="1">
    <location>
        <position position="90"/>
    </location>
</feature>
<feature type="cross-link" description="Glycyl lysine isopeptide (Lys-Gly) (interchain with G-Cter in ubiquitin)" evidence="1">
    <location>
        <position position="202"/>
    </location>
</feature>
<feature type="cross-link" description="Glycyl lysine isopeptide (Lys-Gly) (interchain with G-Cter in SUMO2); alternate" evidence="1">
    <location>
        <position position="214"/>
    </location>
</feature>
<feature type="cross-link" description="Glycyl lysine isopeptide (Lys-Gly) (interchain with G-Cter in ubiquitin); alternate" evidence="1">
    <location>
        <position position="214"/>
    </location>
</feature>
<feature type="cross-link" description="Glycyl lysine isopeptide (Lys-Gly) (interchain with G-Cter in SUMO2)" evidence="1">
    <location>
        <position position="230"/>
    </location>
</feature>
<dbReference type="EC" id="4.2.99.18" evidence="1"/>
<dbReference type="EMBL" id="DQ660373">
    <property type="protein sequence ID" value="ABG48767.1"/>
    <property type="molecule type" value="mRNA"/>
</dbReference>
<dbReference type="RefSeq" id="NP_001038066.1">
    <property type="nucleotide sequence ID" value="NM_001044601.1"/>
</dbReference>
<dbReference type="RefSeq" id="XP_013834591.1">
    <property type="nucleotide sequence ID" value="XM_013979137.1"/>
</dbReference>
<dbReference type="RefSeq" id="XP_020957926.1">
    <property type="nucleotide sequence ID" value="XM_021102267.1"/>
</dbReference>
<dbReference type="RefSeq" id="XP_020957927.1">
    <property type="nucleotide sequence ID" value="XM_021102268.1"/>
</dbReference>
<dbReference type="RefSeq" id="XP_020957928.1">
    <property type="nucleotide sequence ID" value="XM_021102269.1"/>
</dbReference>
<dbReference type="PDB" id="3J7P">
    <property type="method" value="EM"/>
    <property type="resolution" value="3.50 A"/>
    <property type="chains" value="SD=1-243"/>
</dbReference>
<dbReference type="PDB" id="3J7R">
    <property type="method" value="EM"/>
    <property type="resolution" value="3.90 A"/>
    <property type="chains" value="SD=1-243"/>
</dbReference>
<dbReference type="PDBsum" id="3J7P"/>
<dbReference type="PDBsum" id="3J7R"/>
<dbReference type="SMR" id="Q0Z8U2"/>
<dbReference type="FunCoup" id="Q0Z8U2">
    <property type="interactions" value="1812"/>
</dbReference>
<dbReference type="STRING" id="9823.ENSSSCP00000061901"/>
<dbReference type="PaxDb" id="9823-ENSSSCP00000015774"/>
<dbReference type="PeptideAtlas" id="Q0Z8U2"/>
<dbReference type="Ensembl" id="ENSSSCT00015093994.1">
    <property type="protein sequence ID" value="ENSSSCP00015038515.1"/>
    <property type="gene ID" value="ENSSSCG00015069779.1"/>
</dbReference>
<dbReference type="Ensembl" id="ENSSSCT00025067863.1">
    <property type="protein sequence ID" value="ENSSSCP00025029126.1"/>
    <property type="gene ID" value="ENSSSCG00025049588.1"/>
</dbReference>
<dbReference type="Ensembl" id="ENSSSCT00035093636.1">
    <property type="protein sequence ID" value="ENSSSCP00035039302.1"/>
    <property type="gene ID" value="ENSSSCG00035069245.1"/>
</dbReference>
<dbReference type="Ensembl" id="ENSSSCT00040087970.1">
    <property type="protein sequence ID" value="ENSSSCP00040038652.1"/>
    <property type="gene ID" value="ENSSSCG00040063953.1"/>
</dbReference>
<dbReference type="Ensembl" id="ENSSSCT00045044080.1">
    <property type="protein sequence ID" value="ENSSSCP00045030588.1"/>
    <property type="gene ID" value="ENSSSCG00045025591.1"/>
</dbReference>
<dbReference type="Ensembl" id="ENSSSCT00050008995.1">
    <property type="protein sequence ID" value="ENSSSCP00050003835.1"/>
    <property type="gene ID" value="ENSSSCG00050006561.1"/>
</dbReference>
<dbReference type="Ensembl" id="ENSSSCT00055044076.1">
    <property type="protein sequence ID" value="ENSSSCP00055035105.1"/>
    <property type="gene ID" value="ENSSSCG00055022167.1"/>
</dbReference>
<dbReference type="Ensembl" id="ENSSSCT00060002667.1">
    <property type="protein sequence ID" value="ENSSSCP00060000860.1"/>
    <property type="gene ID" value="ENSSSCG00060002165.1"/>
</dbReference>
<dbReference type="Ensembl" id="ENSSSCT00065021126.1">
    <property type="protein sequence ID" value="ENSSSCP00065008538.1"/>
    <property type="gene ID" value="ENSSSCG00065015941.1"/>
</dbReference>
<dbReference type="Ensembl" id="ENSSSCT00065021134.1">
    <property type="protein sequence ID" value="ENSSSCP00065008541.1"/>
    <property type="gene ID" value="ENSSSCG00065015941.1"/>
</dbReference>
<dbReference type="Ensembl" id="ENSSSCT00070035430.1">
    <property type="protein sequence ID" value="ENSSSCP00070029601.1"/>
    <property type="gene ID" value="ENSSSCG00070017922.1"/>
</dbReference>
<dbReference type="Ensembl" id="ENSSSCT00115034437">
    <property type="protein sequence ID" value="ENSSSCP00115032701"/>
    <property type="gene ID" value="ENSSSCG00115019396"/>
</dbReference>
<dbReference type="GeneID" id="733671"/>
<dbReference type="KEGG" id="ssc:733671"/>
<dbReference type="CTD" id="6188"/>
<dbReference type="eggNOG" id="KOG3181">
    <property type="taxonomic scope" value="Eukaryota"/>
</dbReference>
<dbReference type="InParanoid" id="Q0Z8U2"/>
<dbReference type="OMA" id="NKKKWMI"/>
<dbReference type="OrthoDB" id="10248446at2759"/>
<dbReference type="Reactome" id="R-SSC-156827">
    <property type="pathway name" value="L13a-mediated translational silencing of Ceruloplasmin expression"/>
</dbReference>
<dbReference type="Reactome" id="R-SSC-1799339">
    <property type="pathway name" value="SRP-dependent cotranslational protein targeting to membrane"/>
</dbReference>
<dbReference type="Reactome" id="R-SSC-72649">
    <property type="pathway name" value="Translation initiation complex formation"/>
</dbReference>
<dbReference type="Reactome" id="R-SSC-72689">
    <property type="pathway name" value="Formation of a pool of free 40S subunits"/>
</dbReference>
<dbReference type="Reactome" id="R-SSC-72695">
    <property type="pathway name" value="Formation of the ternary complex, and subsequently, the 43S complex"/>
</dbReference>
<dbReference type="Reactome" id="R-SSC-72702">
    <property type="pathway name" value="Ribosomal scanning and start codon recognition"/>
</dbReference>
<dbReference type="Reactome" id="R-SSC-72706">
    <property type="pathway name" value="GTP hydrolysis and joining of the 60S ribosomal subunit"/>
</dbReference>
<dbReference type="Reactome" id="R-SSC-975956">
    <property type="pathway name" value="Nonsense Mediated Decay (NMD) independent of the Exon Junction Complex (EJC)"/>
</dbReference>
<dbReference type="Reactome" id="R-SSC-975957">
    <property type="pathway name" value="Nonsense Mediated Decay (NMD) enhanced by the Exon Junction Complex (EJC)"/>
</dbReference>
<dbReference type="ChiTaRS" id="RPS3">
    <property type="organism name" value="pig"/>
</dbReference>
<dbReference type="Proteomes" id="UP000008227">
    <property type="component" value="Unplaced"/>
</dbReference>
<dbReference type="Proteomes" id="UP000314985">
    <property type="component" value="Chromosome 9"/>
</dbReference>
<dbReference type="Proteomes" id="UP000694570">
    <property type="component" value="Unplaced"/>
</dbReference>
<dbReference type="Proteomes" id="UP000694571">
    <property type="component" value="Unplaced"/>
</dbReference>
<dbReference type="Proteomes" id="UP000694720">
    <property type="component" value="Unplaced"/>
</dbReference>
<dbReference type="Proteomes" id="UP000694722">
    <property type="component" value="Unplaced"/>
</dbReference>
<dbReference type="Proteomes" id="UP000694723">
    <property type="component" value="Unplaced"/>
</dbReference>
<dbReference type="Proteomes" id="UP000694724">
    <property type="component" value="Unplaced"/>
</dbReference>
<dbReference type="Proteomes" id="UP000694725">
    <property type="component" value="Unplaced"/>
</dbReference>
<dbReference type="Proteomes" id="UP000694726">
    <property type="component" value="Unplaced"/>
</dbReference>
<dbReference type="Proteomes" id="UP000694727">
    <property type="component" value="Unplaced"/>
</dbReference>
<dbReference type="Proteomes" id="UP000694728">
    <property type="component" value="Unplaced"/>
</dbReference>
<dbReference type="Bgee" id="ENSSSCG00000014855">
    <property type="expression patterns" value="Expressed in granulosa cell and 46 other cell types or tissues"/>
</dbReference>
<dbReference type="ExpressionAtlas" id="Q0Z8U2">
    <property type="expression patterns" value="baseline and differential"/>
</dbReference>
<dbReference type="GO" id="GO:0098556">
    <property type="term" value="C:cytoplasmic side of rough endoplasmic reticulum membrane"/>
    <property type="evidence" value="ECO:0000314"/>
    <property type="project" value="UniProtKB"/>
</dbReference>
<dbReference type="GO" id="GO:0022627">
    <property type="term" value="C:cytosolic small ribosomal subunit"/>
    <property type="evidence" value="ECO:0000314"/>
    <property type="project" value="UniProtKB"/>
</dbReference>
<dbReference type="GO" id="GO:0005743">
    <property type="term" value="C:mitochondrial inner membrane"/>
    <property type="evidence" value="ECO:0007669"/>
    <property type="project" value="UniProtKB-SubCell"/>
</dbReference>
<dbReference type="GO" id="GO:0005730">
    <property type="term" value="C:nucleolus"/>
    <property type="evidence" value="ECO:0007669"/>
    <property type="project" value="UniProtKB-SubCell"/>
</dbReference>
<dbReference type="GO" id="GO:0005634">
    <property type="term" value="C:nucleus"/>
    <property type="evidence" value="ECO:0000318"/>
    <property type="project" value="GO_Central"/>
</dbReference>
<dbReference type="GO" id="GO:1990904">
    <property type="term" value="C:ribonucleoprotein complex"/>
    <property type="evidence" value="ECO:0000250"/>
    <property type="project" value="UniProtKB"/>
</dbReference>
<dbReference type="GO" id="GO:0005819">
    <property type="term" value="C:spindle"/>
    <property type="evidence" value="ECO:0007669"/>
    <property type="project" value="UniProtKB-SubCell"/>
</dbReference>
<dbReference type="GO" id="GO:0140078">
    <property type="term" value="F:class I DNA-(apurinic or apyrimidinic site) endonuclease activity"/>
    <property type="evidence" value="ECO:0007669"/>
    <property type="project" value="UniProtKB-EC"/>
</dbReference>
<dbReference type="GO" id="GO:0003677">
    <property type="term" value="F:DNA binding"/>
    <property type="evidence" value="ECO:0007669"/>
    <property type="project" value="UniProtKB-KW"/>
</dbReference>
<dbReference type="GO" id="GO:0003723">
    <property type="term" value="F:RNA binding"/>
    <property type="evidence" value="ECO:0007669"/>
    <property type="project" value="UniProtKB-KW"/>
</dbReference>
<dbReference type="GO" id="GO:0003735">
    <property type="term" value="F:structural constituent of ribosome"/>
    <property type="evidence" value="ECO:0000318"/>
    <property type="project" value="GO_Central"/>
</dbReference>
<dbReference type="GO" id="GO:0006915">
    <property type="term" value="P:apoptotic process"/>
    <property type="evidence" value="ECO:0007669"/>
    <property type="project" value="UniProtKB-KW"/>
</dbReference>
<dbReference type="GO" id="GO:0051301">
    <property type="term" value="P:cell division"/>
    <property type="evidence" value="ECO:0007669"/>
    <property type="project" value="UniProtKB-KW"/>
</dbReference>
<dbReference type="GO" id="GO:0006281">
    <property type="term" value="P:DNA repair"/>
    <property type="evidence" value="ECO:0007669"/>
    <property type="project" value="UniProtKB-KW"/>
</dbReference>
<dbReference type="GO" id="GO:2001235">
    <property type="term" value="P:positive regulation of apoptotic signaling pathway"/>
    <property type="evidence" value="ECO:0000318"/>
    <property type="project" value="GO_Central"/>
</dbReference>
<dbReference type="GO" id="GO:0006417">
    <property type="term" value="P:regulation of translation"/>
    <property type="evidence" value="ECO:0007669"/>
    <property type="project" value="UniProtKB-KW"/>
</dbReference>
<dbReference type="GO" id="GO:0006412">
    <property type="term" value="P:translation"/>
    <property type="evidence" value="ECO:0007669"/>
    <property type="project" value="InterPro"/>
</dbReference>
<dbReference type="CDD" id="cd02413">
    <property type="entry name" value="KH-II_40S_S3"/>
    <property type="match status" value="1"/>
</dbReference>
<dbReference type="FunFam" id="3.30.1140.32:FF:000005">
    <property type="entry name" value="40S ribosomal protein S3"/>
    <property type="match status" value="1"/>
</dbReference>
<dbReference type="FunFam" id="3.30.300.20:FF:000006">
    <property type="entry name" value="40S ribosomal protein S3"/>
    <property type="match status" value="1"/>
</dbReference>
<dbReference type="Gene3D" id="3.30.300.20">
    <property type="match status" value="1"/>
</dbReference>
<dbReference type="Gene3D" id="3.30.1140.32">
    <property type="entry name" value="Ribosomal protein S3, C-terminal domain"/>
    <property type="match status" value="1"/>
</dbReference>
<dbReference type="InterPro" id="IPR015946">
    <property type="entry name" value="KH_dom-like_a/b"/>
</dbReference>
<dbReference type="InterPro" id="IPR004044">
    <property type="entry name" value="KH_dom_type_2"/>
</dbReference>
<dbReference type="InterPro" id="IPR009019">
    <property type="entry name" value="KH_sf_prok-type"/>
</dbReference>
<dbReference type="InterPro" id="IPR036419">
    <property type="entry name" value="Ribosomal_S3_C_sf"/>
</dbReference>
<dbReference type="InterPro" id="IPR001351">
    <property type="entry name" value="Ribosomal_uS3_C"/>
</dbReference>
<dbReference type="InterPro" id="IPR018280">
    <property type="entry name" value="Ribosomal_uS3_CS"/>
</dbReference>
<dbReference type="InterPro" id="IPR005703">
    <property type="entry name" value="Ribosomal_uS3_euk/arc"/>
</dbReference>
<dbReference type="NCBIfam" id="NF003219">
    <property type="entry name" value="PRK04191.1"/>
    <property type="match status" value="1"/>
</dbReference>
<dbReference type="NCBIfam" id="TIGR01008">
    <property type="entry name" value="uS3_euk_arch"/>
    <property type="match status" value="1"/>
</dbReference>
<dbReference type="PANTHER" id="PTHR11760">
    <property type="entry name" value="30S/40S RIBOSOMAL PROTEIN S3"/>
    <property type="match status" value="1"/>
</dbReference>
<dbReference type="PANTHER" id="PTHR11760:SF32">
    <property type="entry name" value="SMALL RIBOSOMAL SUBUNIT PROTEIN US3"/>
    <property type="match status" value="1"/>
</dbReference>
<dbReference type="Pfam" id="PF07650">
    <property type="entry name" value="KH_2"/>
    <property type="match status" value="1"/>
</dbReference>
<dbReference type="Pfam" id="PF00189">
    <property type="entry name" value="Ribosomal_S3_C"/>
    <property type="match status" value="1"/>
</dbReference>
<dbReference type="SUPFAM" id="SSF54814">
    <property type="entry name" value="Prokaryotic type KH domain (KH-domain type II)"/>
    <property type="match status" value="1"/>
</dbReference>
<dbReference type="SUPFAM" id="SSF54821">
    <property type="entry name" value="Ribosomal protein S3 C-terminal domain"/>
    <property type="match status" value="1"/>
</dbReference>
<dbReference type="PROSITE" id="PS50823">
    <property type="entry name" value="KH_TYPE_2"/>
    <property type="match status" value="1"/>
</dbReference>
<dbReference type="PROSITE" id="PS00548">
    <property type="entry name" value="RIBOSOMAL_S3"/>
    <property type="match status" value="1"/>
</dbReference>
<gene>
    <name type="primary">RPS3</name>
</gene>
<keyword id="KW-0002">3D-structure</keyword>
<keyword id="KW-0007">Acetylation</keyword>
<keyword id="KW-0053">Apoptosis</keyword>
<keyword id="KW-0131">Cell cycle</keyword>
<keyword id="KW-0132">Cell division</keyword>
<keyword id="KW-0963">Cytoplasm</keyword>
<keyword id="KW-0206">Cytoskeleton</keyword>
<keyword id="KW-0227">DNA damage</keyword>
<keyword id="KW-0234">DNA repair</keyword>
<keyword id="KW-0238">DNA-binding</keyword>
<keyword id="KW-1017">Isopeptide bond</keyword>
<keyword id="KW-0456">Lyase</keyword>
<keyword id="KW-0472">Membrane</keyword>
<keyword id="KW-0488">Methylation</keyword>
<keyword id="KW-0496">Mitochondrion</keyword>
<keyword id="KW-0999">Mitochondrion inner membrane</keyword>
<keyword id="KW-0498">Mitosis</keyword>
<keyword id="KW-0539">Nucleus</keyword>
<keyword id="KW-0597">Phosphoprotein</keyword>
<keyword id="KW-1185">Reference proteome</keyword>
<keyword id="KW-0687">Ribonucleoprotein</keyword>
<keyword id="KW-0689">Ribosomal protein</keyword>
<keyword id="KW-0694">RNA-binding</keyword>
<keyword id="KW-0804">Transcription</keyword>
<keyword id="KW-0805">Transcription regulation</keyword>
<keyword id="KW-0810">Translation regulation</keyword>
<keyword id="KW-0832">Ubl conjugation</keyword>
<evidence type="ECO:0000250" key="1">
    <source>
        <dbReference type="UniProtKB" id="P23396"/>
    </source>
</evidence>
<evidence type="ECO:0000250" key="2">
    <source>
        <dbReference type="UniProtKB" id="P62908"/>
    </source>
</evidence>
<evidence type="ECO:0000255" key="3">
    <source>
        <dbReference type="PROSITE-ProRule" id="PRU00118"/>
    </source>
</evidence>
<evidence type="ECO:0000256" key="4">
    <source>
        <dbReference type="SAM" id="MobiDB-lite"/>
    </source>
</evidence>
<evidence type="ECO:0000305" key="5"/>